<sequence>MEKFPMTPRGFEKLKEELRWRQQSERPRIIEAIAEARAHGDLSENAEYHAAKEAQSLNEGRINELEDLVARAEVIDVSKLTGDRIKFGATVTMIDEDTEEEKIYQIVGDQEADVKEGRISISSPIARALIGKGEGDTIEVNAPGGSRSYEIIALKFV</sequence>
<evidence type="ECO:0000255" key="1">
    <source>
        <dbReference type="HAMAP-Rule" id="MF_00105"/>
    </source>
</evidence>
<accession>Q2YRN8</accession>
<keyword id="KW-0238">DNA-binding</keyword>
<keyword id="KW-1185">Reference proteome</keyword>
<keyword id="KW-0804">Transcription</keyword>
<keyword id="KW-0805">Transcription regulation</keyword>
<organism>
    <name type="scientific">Brucella abortus (strain 2308)</name>
    <dbReference type="NCBI Taxonomy" id="359391"/>
    <lineage>
        <taxon>Bacteria</taxon>
        <taxon>Pseudomonadati</taxon>
        <taxon>Pseudomonadota</taxon>
        <taxon>Alphaproteobacteria</taxon>
        <taxon>Hyphomicrobiales</taxon>
        <taxon>Brucellaceae</taxon>
        <taxon>Brucella/Ochrobactrum group</taxon>
        <taxon>Brucella</taxon>
    </lineage>
</organism>
<proteinExistence type="inferred from homology"/>
<comment type="function">
    <text evidence="1">Necessary for efficient RNA polymerase transcription elongation past template-encoded arresting sites. The arresting sites in DNA have the property of trapping a certain fraction of elongating RNA polymerases that pass through, resulting in locked ternary complexes. Cleavage of the nascent transcript by cleavage factors such as GreA or GreB allows the resumption of elongation from the new 3'terminus. GreA releases sequences of 2 to 3 nucleotides.</text>
</comment>
<comment type="similarity">
    <text evidence="1">Belongs to the GreA/GreB family.</text>
</comment>
<feature type="chain" id="PRO_1000075865" description="Transcription elongation factor GreA">
    <location>
        <begin position="1"/>
        <end position="157"/>
    </location>
</feature>
<reference key="1">
    <citation type="journal article" date="2005" name="Infect. Immun.">
        <title>Whole-genome analyses of speciation events in pathogenic Brucellae.</title>
        <authorList>
            <person name="Chain P.S."/>
            <person name="Comerci D.J."/>
            <person name="Tolmasky M.E."/>
            <person name="Larimer F.W."/>
            <person name="Malfatti S.A."/>
            <person name="Vergez L.M."/>
            <person name="Aguero F."/>
            <person name="Land M.L."/>
            <person name="Ugalde R.A."/>
            <person name="Garcia E."/>
        </authorList>
    </citation>
    <scope>NUCLEOTIDE SEQUENCE [LARGE SCALE GENOMIC DNA]</scope>
    <source>
        <strain>2308</strain>
    </source>
</reference>
<dbReference type="EMBL" id="AM040264">
    <property type="protein sequence ID" value="CAJ11479.1"/>
    <property type="molecule type" value="Genomic_DNA"/>
</dbReference>
<dbReference type="RefSeq" id="WP_002964610.1">
    <property type="nucleotide sequence ID" value="NZ_KN046823.1"/>
</dbReference>
<dbReference type="SMR" id="Q2YRN8"/>
<dbReference type="STRING" id="359391.BAB1_1523"/>
<dbReference type="GeneID" id="93016210"/>
<dbReference type="KEGG" id="bmf:BAB1_1523"/>
<dbReference type="PATRIC" id="fig|359391.11.peg.969"/>
<dbReference type="HOGENOM" id="CLU_101379_2_0_5"/>
<dbReference type="Proteomes" id="UP000002719">
    <property type="component" value="Chromosome I"/>
</dbReference>
<dbReference type="GO" id="GO:0003677">
    <property type="term" value="F:DNA binding"/>
    <property type="evidence" value="ECO:0007669"/>
    <property type="project" value="UniProtKB-UniRule"/>
</dbReference>
<dbReference type="GO" id="GO:0070063">
    <property type="term" value="F:RNA polymerase binding"/>
    <property type="evidence" value="ECO:0007669"/>
    <property type="project" value="InterPro"/>
</dbReference>
<dbReference type="GO" id="GO:0006354">
    <property type="term" value="P:DNA-templated transcription elongation"/>
    <property type="evidence" value="ECO:0007669"/>
    <property type="project" value="TreeGrafter"/>
</dbReference>
<dbReference type="GO" id="GO:0032784">
    <property type="term" value="P:regulation of DNA-templated transcription elongation"/>
    <property type="evidence" value="ECO:0007669"/>
    <property type="project" value="UniProtKB-UniRule"/>
</dbReference>
<dbReference type="FunFam" id="1.10.287.180:FF:000001">
    <property type="entry name" value="Transcription elongation factor GreA"/>
    <property type="match status" value="1"/>
</dbReference>
<dbReference type="FunFam" id="3.10.50.30:FF:000001">
    <property type="entry name" value="Transcription elongation factor GreA"/>
    <property type="match status" value="1"/>
</dbReference>
<dbReference type="Gene3D" id="3.10.50.30">
    <property type="entry name" value="Transcription elongation factor, GreA/GreB, C-terminal domain"/>
    <property type="match status" value="1"/>
</dbReference>
<dbReference type="Gene3D" id="1.10.287.180">
    <property type="entry name" value="Transcription elongation factor, GreA/GreB, N-terminal domain"/>
    <property type="match status" value="1"/>
</dbReference>
<dbReference type="HAMAP" id="MF_00105">
    <property type="entry name" value="GreA_GreB"/>
    <property type="match status" value="1"/>
</dbReference>
<dbReference type="InterPro" id="IPR036953">
    <property type="entry name" value="GreA/GreB_C_sf"/>
</dbReference>
<dbReference type="InterPro" id="IPR018151">
    <property type="entry name" value="TF_GreA/GreB_CS"/>
</dbReference>
<dbReference type="InterPro" id="IPR006359">
    <property type="entry name" value="Tscrpt_elong_fac_GreA"/>
</dbReference>
<dbReference type="InterPro" id="IPR028624">
    <property type="entry name" value="Tscrpt_elong_fac_GreA/B"/>
</dbReference>
<dbReference type="InterPro" id="IPR001437">
    <property type="entry name" value="Tscrpt_elong_fac_GreA/B_C"/>
</dbReference>
<dbReference type="InterPro" id="IPR023459">
    <property type="entry name" value="Tscrpt_elong_fac_GreA/B_fam"/>
</dbReference>
<dbReference type="InterPro" id="IPR022691">
    <property type="entry name" value="Tscrpt_elong_fac_GreA/B_N"/>
</dbReference>
<dbReference type="InterPro" id="IPR036805">
    <property type="entry name" value="Tscrpt_elong_fac_GreA/B_N_sf"/>
</dbReference>
<dbReference type="NCBIfam" id="TIGR01462">
    <property type="entry name" value="greA"/>
    <property type="match status" value="1"/>
</dbReference>
<dbReference type="NCBIfam" id="NF001261">
    <property type="entry name" value="PRK00226.1-2"/>
    <property type="match status" value="1"/>
</dbReference>
<dbReference type="NCBIfam" id="NF001263">
    <property type="entry name" value="PRK00226.1-4"/>
    <property type="match status" value="1"/>
</dbReference>
<dbReference type="NCBIfam" id="NF001264">
    <property type="entry name" value="PRK00226.1-5"/>
    <property type="match status" value="1"/>
</dbReference>
<dbReference type="PANTHER" id="PTHR30437">
    <property type="entry name" value="TRANSCRIPTION ELONGATION FACTOR GREA"/>
    <property type="match status" value="1"/>
</dbReference>
<dbReference type="PANTHER" id="PTHR30437:SF4">
    <property type="entry name" value="TRANSCRIPTION ELONGATION FACTOR GREA"/>
    <property type="match status" value="1"/>
</dbReference>
<dbReference type="Pfam" id="PF01272">
    <property type="entry name" value="GreA_GreB"/>
    <property type="match status" value="1"/>
</dbReference>
<dbReference type="Pfam" id="PF03449">
    <property type="entry name" value="GreA_GreB_N"/>
    <property type="match status" value="1"/>
</dbReference>
<dbReference type="PIRSF" id="PIRSF006092">
    <property type="entry name" value="GreA_GreB"/>
    <property type="match status" value="1"/>
</dbReference>
<dbReference type="SUPFAM" id="SSF54534">
    <property type="entry name" value="FKBP-like"/>
    <property type="match status" value="1"/>
</dbReference>
<dbReference type="SUPFAM" id="SSF46557">
    <property type="entry name" value="GreA transcript cleavage protein, N-terminal domain"/>
    <property type="match status" value="1"/>
</dbReference>
<dbReference type="PROSITE" id="PS00829">
    <property type="entry name" value="GREAB_1"/>
    <property type="match status" value="1"/>
</dbReference>
<dbReference type="PROSITE" id="PS00830">
    <property type="entry name" value="GREAB_2"/>
    <property type="match status" value="1"/>
</dbReference>
<protein>
    <recommendedName>
        <fullName evidence="1">Transcription elongation factor GreA</fullName>
    </recommendedName>
    <alternativeName>
        <fullName evidence="1">Transcript cleavage factor GreA</fullName>
    </alternativeName>
</protein>
<name>GREA_BRUA2</name>
<gene>
    <name evidence="1" type="primary">greA</name>
    <name type="ordered locus">BAB1_1523</name>
</gene>